<comment type="function">
    <text evidence="1">The RuvA-RuvB-RuvC complex processes Holliday junction (HJ) DNA during genetic recombination and DNA repair, while the RuvA-RuvB complex plays an important role in the rescue of blocked DNA replication forks via replication fork reversal (RFR). RuvA specifically binds to HJ cruciform DNA, conferring on it an open structure. The RuvB hexamer acts as an ATP-dependent pump, pulling dsDNA into and through the RuvAB complex. RuvB forms 2 homohexamers on either side of HJ DNA bound by 1 or 2 RuvA tetramers; 4 subunits per hexamer contact DNA at a time. Coordinated motions by a converter formed by DNA-disengaged RuvB subunits stimulates ATP hydrolysis and nucleotide exchange. Immobilization of the converter enables RuvB to convert the ATP-contained energy into a lever motion, pulling 2 nucleotides of DNA out of the RuvA tetramer per ATP hydrolyzed, thus driving DNA branch migration. The RuvB motors rotate together with the DNA substrate, which together with the progressing nucleotide cycle form the mechanistic basis for DNA recombination by continuous HJ branch migration. Branch migration allows RuvC to scan DNA until it finds its consensus sequence, where it cleaves and resolves cruciform DNA.</text>
</comment>
<comment type="catalytic activity">
    <reaction evidence="1">
        <text>ATP + H2O = ADP + phosphate + H(+)</text>
        <dbReference type="Rhea" id="RHEA:13065"/>
        <dbReference type="ChEBI" id="CHEBI:15377"/>
        <dbReference type="ChEBI" id="CHEBI:15378"/>
        <dbReference type="ChEBI" id="CHEBI:30616"/>
        <dbReference type="ChEBI" id="CHEBI:43474"/>
        <dbReference type="ChEBI" id="CHEBI:456216"/>
    </reaction>
</comment>
<comment type="subunit">
    <text evidence="1">Homohexamer. Forms an RuvA(8)-RuvB(12)-Holliday junction (HJ) complex. HJ DNA is sandwiched between 2 RuvA tetramers; dsDNA enters through RuvA and exits via RuvB. An RuvB hexamer assembles on each DNA strand where it exits the tetramer. Each RuvB hexamer is contacted by two RuvA subunits (via domain III) on 2 adjacent RuvB subunits; this complex drives branch migration. In the full resolvosome a probable DNA-RuvA(4)-RuvB(12)-RuvC(2) complex forms which resolves the HJ.</text>
</comment>
<comment type="subcellular location">
    <subcellularLocation>
        <location evidence="1">Cytoplasm</location>
    </subcellularLocation>
</comment>
<comment type="domain">
    <text evidence="1">Has 3 domains, the large (RuvB-L) and small ATPase (RuvB-S) domains and the C-terminal head (RuvB-H) domain. The head domain binds DNA, while the ATPase domains jointly bind ATP, ADP or are empty depending on the state of the subunit in the translocation cycle. During a single DNA translocation step the structure of each domain remains the same, but their relative positions change.</text>
</comment>
<comment type="similarity">
    <text evidence="1">Belongs to the RuvB family.</text>
</comment>
<sequence>MPERLITPKGSRDDEAADFSIRPQRLADYVGQPAVREQMEIFIGAARARGEALDHVLIFGPPGLGKTTLSHIIAHELGVNLRHSSGPVLERPGDLAALLTNLEPRDVLFVDEIHRLSPVVEEVLYPAMEDFQLDIVIGEGPAARSIKLDLPPFTLVGATTRAGLLTSPLRDRFGIVQRLEFYNVQDLTRIVQRAAGILGVSIEPAGAAEIARRSRGTPRIANRLLRRVRDYAQIKADGVITDQVADRALDLLDVDVQGFDAQDRRLLLAVIEKFDGGPVGVDSLAAAIGEERGTIEDVVEPYLIQQGFLMRTPRGRMATSNAYRYFGLPAPRMTGVPGDLFGAQEEGGGEGKL</sequence>
<organism>
    <name type="scientific">Thioalkalivibrio sulfidiphilus (strain HL-EbGR7)</name>
    <dbReference type="NCBI Taxonomy" id="396588"/>
    <lineage>
        <taxon>Bacteria</taxon>
        <taxon>Pseudomonadati</taxon>
        <taxon>Pseudomonadota</taxon>
        <taxon>Gammaproteobacteria</taxon>
        <taxon>Chromatiales</taxon>
        <taxon>Ectothiorhodospiraceae</taxon>
        <taxon>Thioalkalivibrio</taxon>
    </lineage>
</organism>
<name>RUVB_THISH</name>
<gene>
    <name evidence="1" type="primary">ruvB</name>
    <name type="ordered locus">Tgr7_2234</name>
</gene>
<accession>B8GUJ4</accession>
<keyword id="KW-0067">ATP-binding</keyword>
<keyword id="KW-0963">Cytoplasm</keyword>
<keyword id="KW-0227">DNA damage</keyword>
<keyword id="KW-0233">DNA recombination</keyword>
<keyword id="KW-0234">DNA repair</keyword>
<keyword id="KW-0238">DNA-binding</keyword>
<keyword id="KW-0378">Hydrolase</keyword>
<keyword id="KW-0547">Nucleotide-binding</keyword>
<keyword id="KW-1185">Reference proteome</keyword>
<proteinExistence type="inferred from homology"/>
<protein>
    <recommendedName>
        <fullName evidence="1">Holliday junction branch migration complex subunit RuvB</fullName>
        <ecNumber evidence="1">3.6.4.-</ecNumber>
    </recommendedName>
</protein>
<dbReference type="EC" id="3.6.4.-" evidence="1"/>
<dbReference type="EMBL" id="CP001339">
    <property type="protein sequence ID" value="ACL73314.1"/>
    <property type="molecule type" value="Genomic_DNA"/>
</dbReference>
<dbReference type="RefSeq" id="WP_012638790.1">
    <property type="nucleotide sequence ID" value="NC_011901.1"/>
</dbReference>
<dbReference type="SMR" id="B8GUJ4"/>
<dbReference type="STRING" id="396588.Tgr7_2234"/>
<dbReference type="KEGG" id="tgr:Tgr7_2234"/>
<dbReference type="eggNOG" id="COG2255">
    <property type="taxonomic scope" value="Bacteria"/>
</dbReference>
<dbReference type="HOGENOM" id="CLU_055599_1_0_6"/>
<dbReference type="OrthoDB" id="9804478at2"/>
<dbReference type="Proteomes" id="UP000002383">
    <property type="component" value="Chromosome"/>
</dbReference>
<dbReference type="GO" id="GO:0005737">
    <property type="term" value="C:cytoplasm"/>
    <property type="evidence" value="ECO:0007669"/>
    <property type="project" value="UniProtKB-SubCell"/>
</dbReference>
<dbReference type="GO" id="GO:0048476">
    <property type="term" value="C:Holliday junction resolvase complex"/>
    <property type="evidence" value="ECO:0007669"/>
    <property type="project" value="UniProtKB-UniRule"/>
</dbReference>
<dbReference type="GO" id="GO:0005524">
    <property type="term" value="F:ATP binding"/>
    <property type="evidence" value="ECO:0007669"/>
    <property type="project" value="UniProtKB-UniRule"/>
</dbReference>
<dbReference type="GO" id="GO:0016887">
    <property type="term" value="F:ATP hydrolysis activity"/>
    <property type="evidence" value="ECO:0007669"/>
    <property type="project" value="InterPro"/>
</dbReference>
<dbReference type="GO" id="GO:0000400">
    <property type="term" value="F:four-way junction DNA binding"/>
    <property type="evidence" value="ECO:0007669"/>
    <property type="project" value="UniProtKB-UniRule"/>
</dbReference>
<dbReference type="GO" id="GO:0009378">
    <property type="term" value="F:four-way junction helicase activity"/>
    <property type="evidence" value="ECO:0007669"/>
    <property type="project" value="InterPro"/>
</dbReference>
<dbReference type="GO" id="GO:0006310">
    <property type="term" value="P:DNA recombination"/>
    <property type="evidence" value="ECO:0007669"/>
    <property type="project" value="UniProtKB-UniRule"/>
</dbReference>
<dbReference type="GO" id="GO:0006281">
    <property type="term" value="P:DNA repair"/>
    <property type="evidence" value="ECO:0007669"/>
    <property type="project" value="UniProtKB-UniRule"/>
</dbReference>
<dbReference type="CDD" id="cd00009">
    <property type="entry name" value="AAA"/>
    <property type="match status" value="1"/>
</dbReference>
<dbReference type="FunFam" id="1.10.10.10:FF:000086">
    <property type="entry name" value="Holliday junction ATP-dependent DNA helicase RuvB"/>
    <property type="match status" value="1"/>
</dbReference>
<dbReference type="FunFam" id="3.40.50.300:FF:000073">
    <property type="entry name" value="Holliday junction ATP-dependent DNA helicase RuvB"/>
    <property type="match status" value="1"/>
</dbReference>
<dbReference type="Gene3D" id="1.10.8.60">
    <property type="match status" value="1"/>
</dbReference>
<dbReference type="Gene3D" id="3.40.50.300">
    <property type="entry name" value="P-loop containing nucleotide triphosphate hydrolases"/>
    <property type="match status" value="1"/>
</dbReference>
<dbReference type="Gene3D" id="1.10.10.10">
    <property type="entry name" value="Winged helix-like DNA-binding domain superfamily/Winged helix DNA-binding domain"/>
    <property type="match status" value="1"/>
</dbReference>
<dbReference type="HAMAP" id="MF_00016">
    <property type="entry name" value="DNA_HJ_migration_RuvB"/>
    <property type="match status" value="1"/>
</dbReference>
<dbReference type="InterPro" id="IPR003593">
    <property type="entry name" value="AAA+_ATPase"/>
</dbReference>
<dbReference type="InterPro" id="IPR041445">
    <property type="entry name" value="AAA_lid_4"/>
</dbReference>
<dbReference type="InterPro" id="IPR004605">
    <property type="entry name" value="DNA_helicase_Holl-junc_RuvB"/>
</dbReference>
<dbReference type="InterPro" id="IPR027417">
    <property type="entry name" value="P-loop_NTPase"/>
</dbReference>
<dbReference type="InterPro" id="IPR008824">
    <property type="entry name" value="RuvB-like_N"/>
</dbReference>
<dbReference type="InterPro" id="IPR008823">
    <property type="entry name" value="RuvB_C"/>
</dbReference>
<dbReference type="InterPro" id="IPR036388">
    <property type="entry name" value="WH-like_DNA-bd_sf"/>
</dbReference>
<dbReference type="InterPro" id="IPR036390">
    <property type="entry name" value="WH_DNA-bd_sf"/>
</dbReference>
<dbReference type="NCBIfam" id="NF000868">
    <property type="entry name" value="PRK00080.1"/>
    <property type="match status" value="1"/>
</dbReference>
<dbReference type="NCBIfam" id="TIGR00635">
    <property type="entry name" value="ruvB"/>
    <property type="match status" value="1"/>
</dbReference>
<dbReference type="PANTHER" id="PTHR42848">
    <property type="match status" value="1"/>
</dbReference>
<dbReference type="PANTHER" id="PTHR42848:SF1">
    <property type="entry name" value="HOLLIDAY JUNCTION BRANCH MIGRATION COMPLEX SUBUNIT RUVB"/>
    <property type="match status" value="1"/>
</dbReference>
<dbReference type="Pfam" id="PF17864">
    <property type="entry name" value="AAA_lid_4"/>
    <property type="match status" value="1"/>
</dbReference>
<dbReference type="Pfam" id="PF05491">
    <property type="entry name" value="RuvB_C"/>
    <property type="match status" value="1"/>
</dbReference>
<dbReference type="Pfam" id="PF05496">
    <property type="entry name" value="RuvB_N"/>
    <property type="match status" value="1"/>
</dbReference>
<dbReference type="SMART" id="SM00382">
    <property type="entry name" value="AAA"/>
    <property type="match status" value="1"/>
</dbReference>
<dbReference type="SUPFAM" id="SSF52540">
    <property type="entry name" value="P-loop containing nucleoside triphosphate hydrolases"/>
    <property type="match status" value="1"/>
</dbReference>
<dbReference type="SUPFAM" id="SSF46785">
    <property type="entry name" value="Winged helix' DNA-binding domain"/>
    <property type="match status" value="1"/>
</dbReference>
<reference key="1">
    <citation type="journal article" date="2011" name="Stand. Genomic Sci.">
        <title>Complete genome sequence of 'Thioalkalivibrio sulfidophilus' HL-EbGr7.</title>
        <authorList>
            <person name="Muyzer G."/>
            <person name="Sorokin D.Y."/>
            <person name="Mavromatis K."/>
            <person name="Lapidus A."/>
            <person name="Clum A."/>
            <person name="Ivanova N."/>
            <person name="Pati A."/>
            <person name="d'Haeseleer P."/>
            <person name="Woyke T."/>
            <person name="Kyrpides N.C."/>
        </authorList>
    </citation>
    <scope>NUCLEOTIDE SEQUENCE [LARGE SCALE GENOMIC DNA]</scope>
    <source>
        <strain>HL-EbGR7</strain>
    </source>
</reference>
<evidence type="ECO:0000255" key="1">
    <source>
        <dbReference type="HAMAP-Rule" id="MF_00016"/>
    </source>
</evidence>
<feature type="chain" id="PRO_1000116664" description="Holliday junction branch migration complex subunit RuvB">
    <location>
        <begin position="1"/>
        <end position="353"/>
    </location>
</feature>
<feature type="region of interest" description="Large ATPase domain (RuvB-L)" evidence="1">
    <location>
        <begin position="1"/>
        <end position="182"/>
    </location>
</feature>
<feature type="region of interest" description="Small ATPAse domain (RuvB-S)" evidence="1">
    <location>
        <begin position="183"/>
        <end position="253"/>
    </location>
</feature>
<feature type="region of interest" description="Head domain (RuvB-H)" evidence="1">
    <location>
        <begin position="256"/>
        <end position="353"/>
    </location>
</feature>
<feature type="binding site" evidence="1">
    <location>
        <position position="21"/>
    </location>
    <ligand>
        <name>ATP</name>
        <dbReference type="ChEBI" id="CHEBI:30616"/>
    </ligand>
</feature>
<feature type="binding site" evidence="1">
    <location>
        <position position="22"/>
    </location>
    <ligand>
        <name>ATP</name>
        <dbReference type="ChEBI" id="CHEBI:30616"/>
    </ligand>
</feature>
<feature type="binding site" evidence="1">
    <location>
        <position position="63"/>
    </location>
    <ligand>
        <name>ATP</name>
        <dbReference type="ChEBI" id="CHEBI:30616"/>
    </ligand>
</feature>
<feature type="binding site" evidence="1">
    <location>
        <position position="66"/>
    </location>
    <ligand>
        <name>ATP</name>
        <dbReference type="ChEBI" id="CHEBI:30616"/>
    </ligand>
</feature>
<feature type="binding site" evidence="1">
    <location>
        <position position="67"/>
    </location>
    <ligand>
        <name>ATP</name>
        <dbReference type="ChEBI" id="CHEBI:30616"/>
    </ligand>
</feature>
<feature type="binding site" evidence="1">
    <location>
        <position position="67"/>
    </location>
    <ligand>
        <name>Mg(2+)</name>
        <dbReference type="ChEBI" id="CHEBI:18420"/>
    </ligand>
</feature>
<feature type="binding site" evidence="1">
    <location>
        <position position="68"/>
    </location>
    <ligand>
        <name>ATP</name>
        <dbReference type="ChEBI" id="CHEBI:30616"/>
    </ligand>
</feature>
<feature type="binding site" evidence="1">
    <location>
        <begin position="129"/>
        <end position="131"/>
    </location>
    <ligand>
        <name>ATP</name>
        <dbReference type="ChEBI" id="CHEBI:30616"/>
    </ligand>
</feature>
<feature type="binding site" evidence="1">
    <location>
        <position position="172"/>
    </location>
    <ligand>
        <name>ATP</name>
        <dbReference type="ChEBI" id="CHEBI:30616"/>
    </ligand>
</feature>
<feature type="binding site" evidence="1">
    <location>
        <position position="182"/>
    </location>
    <ligand>
        <name>ATP</name>
        <dbReference type="ChEBI" id="CHEBI:30616"/>
    </ligand>
</feature>
<feature type="binding site" evidence="1">
    <location>
        <position position="219"/>
    </location>
    <ligand>
        <name>ATP</name>
        <dbReference type="ChEBI" id="CHEBI:30616"/>
    </ligand>
</feature>
<feature type="binding site" evidence="1">
    <location>
        <position position="292"/>
    </location>
    <ligand>
        <name>DNA</name>
        <dbReference type="ChEBI" id="CHEBI:16991"/>
    </ligand>
</feature>
<feature type="binding site" evidence="1">
    <location>
        <position position="311"/>
    </location>
    <ligand>
        <name>DNA</name>
        <dbReference type="ChEBI" id="CHEBI:16991"/>
    </ligand>
</feature>
<feature type="binding site" evidence="1">
    <location>
        <position position="316"/>
    </location>
    <ligand>
        <name>DNA</name>
        <dbReference type="ChEBI" id="CHEBI:16991"/>
    </ligand>
</feature>